<evidence type="ECO:0000255" key="1">
    <source>
        <dbReference type="HAMAP-Rule" id="MF_00109"/>
    </source>
</evidence>
<dbReference type="EC" id="2.7.1.71" evidence="1"/>
<dbReference type="EMBL" id="BX950851">
    <property type="protein sequence ID" value="CAG76990.1"/>
    <property type="molecule type" value="Genomic_DNA"/>
</dbReference>
<dbReference type="RefSeq" id="WP_005969451.1">
    <property type="nucleotide sequence ID" value="NC_004547.2"/>
</dbReference>
<dbReference type="SMR" id="Q6CZQ8"/>
<dbReference type="STRING" id="218491.ECA4093"/>
<dbReference type="GeneID" id="93392039"/>
<dbReference type="KEGG" id="eca:ECA4093"/>
<dbReference type="eggNOG" id="COG0703">
    <property type="taxonomic scope" value="Bacteria"/>
</dbReference>
<dbReference type="HOGENOM" id="CLU_057607_2_2_6"/>
<dbReference type="OrthoDB" id="9800332at2"/>
<dbReference type="UniPathway" id="UPA00053">
    <property type="reaction ID" value="UER00088"/>
</dbReference>
<dbReference type="Proteomes" id="UP000007966">
    <property type="component" value="Chromosome"/>
</dbReference>
<dbReference type="GO" id="GO:0005829">
    <property type="term" value="C:cytosol"/>
    <property type="evidence" value="ECO:0007669"/>
    <property type="project" value="TreeGrafter"/>
</dbReference>
<dbReference type="GO" id="GO:0005524">
    <property type="term" value="F:ATP binding"/>
    <property type="evidence" value="ECO:0007669"/>
    <property type="project" value="UniProtKB-UniRule"/>
</dbReference>
<dbReference type="GO" id="GO:0000287">
    <property type="term" value="F:magnesium ion binding"/>
    <property type="evidence" value="ECO:0007669"/>
    <property type="project" value="UniProtKB-UniRule"/>
</dbReference>
<dbReference type="GO" id="GO:0004765">
    <property type="term" value="F:shikimate kinase activity"/>
    <property type="evidence" value="ECO:0007669"/>
    <property type="project" value="UniProtKB-UniRule"/>
</dbReference>
<dbReference type="GO" id="GO:0008652">
    <property type="term" value="P:amino acid biosynthetic process"/>
    <property type="evidence" value="ECO:0007669"/>
    <property type="project" value="UniProtKB-KW"/>
</dbReference>
<dbReference type="GO" id="GO:0009073">
    <property type="term" value="P:aromatic amino acid family biosynthetic process"/>
    <property type="evidence" value="ECO:0007669"/>
    <property type="project" value="UniProtKB-KW"/>
</dbReference>
<dbReference type="GO" id="GO:0009423">
    <property type="term" value="P:chorismate biosynthetic process"/>
    <property type="evidence" value="ECO:0007669"/>
    <property type="project" value="UniProtKB-UniRule"/>
</dbReference>
<dbReference type="CDD" id="cd00464">
    <property type="entry name" value="SK"/>
    <property type="match status" value="1"/>
</dbReference>
<dbReference type="FunFam" id="3.40.50.300:FF:000099">
    <property type="entry name" value="Shikimate kinase 1"/>
    <property type="match status" value="1"/>
</dbReference>
<dbReference type="Gene3D" id="3.40.50.300">
    <property type="entry name" value="P-loop containing nucleotide triphosphate hydrolases"/>
    <property type="match status" value="1"/>
</dbReference>
<dbReference type="HAMAP" id="MF_00109">
    <property type="entry name" value="Shikimate_kinase"/>
    <property type="match status" value="1"/>
</dbReference>
<dbReference type="InterPro" id="IPR027417">
    <property type="entry name" value="P-loop_NTPase"/>
</dbReference>
<dbReference type="InterPro" id="IPR031322">
    <property type="entry name" value="Shikimate/glucono_kinase"/>
</dbReference>
<dbReference type="InterPro" id="IPR000623">
    <property type="entry name" value="Shikimate_kinase/TSH1"/>
</dbReference>
<dbReference type="InterPro" id="IPR023000">
    <property type="entry name" value="Shikimate_kinase_CS"/>
</dbReference>
<dbReference type="NCBIfam" id="NF003456">
    <property type="entry name" value="PRK05057.1"/>
    <property type="match status" value="1"/>
</dbReference>
<dbReference type="PANTHER" id="PTHR21087">
    <property type="entry name" value="SHIKIMATE KINASE"/>
    <property type="match status" value="1"/>
</dbReference>
<dbReference type="PANTHER" id="PTHR21087:SF16">
    <property type="entry name" value="SHIKIMATE KINASE 1, CHLOROPLASTIC"/>
    <property type="match status" value="1"/>
</dbReference>
<dbReference type="Pfam" id="PF01202">
    <property type="entry name" value="SKI"/>
    <property type="match status" value="1"/>
</dbReference>
<dbReference type="PRINTS" id="PR01100">
    <property type="entry name" value="SHIKIMTKNASE"/>
</dbReference>
<dbReference type="SUPFAM" id="SSF52540">
    <property type="entry name" value="P-loop containing nucleoside triphosphate hydrolases"/>
    <property type="match status" value="1"/>
</dbReference>
<dbReference type="PROSITE" id="PS01128">
    <property type="entry name" value="SHIKIMATE_KINASE"/>
    <property type="match status" value="1"/>
</dbReference>
<accession>Q6CZQ8</accession>
<proteinExistence type="inferred from homology"/>
<organism>
    <name type="scientific">Pectobacterium atrosepticum (strain SCRI 1043 / ATCC BAA-672)</name>
    <name type="common">Erwinia carotovora subsp. atroseptica</name>
    <dbReference type="NCBI Taxonomy" id="218491"/>
    <lineage>
        <taxon>Bacteria</taxon>
        <taxon>Pseudomonadati</taxon>
        <taxon>Pseudomonadota</taxon>
        <taxon>Gammaproteobacteria</taxon>
        <taxon>Enterobacterales</taxon>
        <taxon>Pectobacteriaceae</taxon>
        <taxon>Pectobacterium</taxon>
    </lineage>
</organism>
<comment type="function">
    <text evidence="1">Catalyzes the specific phosphorylation of the 3-hydroxyl group of shikimic acid using ATP as a cosubstrate.</text>
</comment>
<comment type="catalytic activity">
    <reaction evidence="1">
        <text>shikimate + ATP = 3-phosphoshikimate + ADP + H(+)</text>
        <dbReference type="Rhea" id="RHEA:13121"/>
        <dbReference type="ChEBI" id="CHEBI:15378"/>
        <dbReference type="ChEBI" id="CHEBI:30616"/>
        <dbReference type="ChEBI" id="CHEBI:36208"/>
        <dbReference type="ChEBI" id="CHEBI:145989"/>
        <dbReference type="ChEBI" id="CHEBI:456216"/>
        <dbReference type="EC" id="2.7.1.71"/>
    </reaction>
</comment>
<comment type="cofactor">
    <cofactor evidence="1">
        <name>Mg(2+)</name>
        <dbReference type="ChEBI" id="CHEBI:18420"/>
    </cofactor>
    <text evidence="1">Binds 1 Mg(2+) ion per subunit.</text>
</comment>
<comment type="pathway">
    <text evidence="1">Metabolic intermediate biosynthesis; chorismate biosynthesis; chorismate from D-erythrose 4-phosphate and phosphoenolpyruvate: step 5/7.</text>
</comment>
<comment type="subunit">
    <text evidence="1">Monomer.</text>
</comment>
<comment type="subcellular location">
    <subcellularLocation>
        <location evidence="1">Cytoplasm</location>
    </subcellularLocation>
</comment>
<comment type="similarity">
    <text evidence="1">Belongs to the shikimate kinase family.</text>
</comment>
<name>AROK_PECAS</name>
<reference key="1">
    <citation type="journal article" date="2004" name="Proc. Natl. Acad. Sci. U.S.A.">
        <title>Genome sequence of the enterobacterial phytopathogen Erwinia carotovora subsp. atroseptica and characterization of virulence factors.</title>
        <authorList>
            <person name="Bell K.S."/>
            <person name="Sebaihia M."/>
            <person name="Pritchard L."/>
            <person name="Holden M.T.G."/>
            <person name="Hyman L.J."/>
            <person name="Holeva M.C."/>
            <person name="Thomson N.R."/>
            <person name="Bentley S.D."/>
            <person name="Churcher L.J.C."/>
            <person name="Mungall K."/>
            <person name="Atkin R."/>
            <person name="Bason N."/>
            <person name="Brooks K."/>
            <person name="Chillingworth T."/>
            <person name="Clark K."/>
            <person name="Doggett J."/>
            <person name="Fraser A."/>
            <person name="Hance Z."/>
            <person name="Hauser H."/>
            <person name="Jagels K."/>
            <person name="Moule S."/>
            <person name="Norbertczak H."/>
            <person name="Ormond D."/>
            <person name="Price C."/>
            <person name="Quail M.A."/>
            <person name="Sanders M."/>
            <person name="Walker D."/>
            <person name="Whitehead S."/>
            <person name="Salmond G.P.C."/>
            <person name="Birch P.R.J."/>
            <person name="Parkhill J."/>
            <person name="Toth I.K."/>
        </authorList>
    </citation>
    <scope>NUCLEOTIDE SEQUENCE [LARGE SCALE GENOMIC DNA]</scope>
    <source>
        <strain>SCRI 1043 / ATCC BAA-672</strain>
    </source>
</reference>
<keyword id="KW-0028">Amino-acid biosynthesis</keyword>
<keyword id="KW-0057">Aromatic amino acid biosynthesis</keyword>
<keyword id="KW-0067">ATP-binding</keyword>
<keyword id="KW-0963">Cytoplasm</keyword>
<keyword id="KW-0418">Kinase</keyword>
<keyword id="KW-0460">Magnesium</keyword>
<keyword id="KW-0479">Metal-binding</keyword>
<keyword id="KW-0547">Nucleotide-binding</keyword>
<keyword id="KW-1185">Reference proteome</keyword>
<keyword id="KW-0808">Transferase</keyword>
<feature type="chain" id="PRO_0000237877" description="Shikimate kinase 1">
    <location>
        <begin position="1"/>
        <end position="173"/>
    </location>
</feature>
<feature type="binding site" evidence="1">
    <location>
        <begin position="14"/>
        <end position="19"/>
    </location>
    <ligand>
        <name>ATP</name>
        <dbReference type="ChEBI" id="CHEBI:30616"/>
    </ligand>
</feature>
<feature type="binding site" evidence="1">
    <location>
        <position position="18"/>
    </location>
    <ligand>
        <name>Mg(2+)</name>
        <dbReference type="ChEBI" id="CHEBI:18420"/>
    </ligand>
</feature>
<feature type="binding site" evidence="1">
    <location>
        <position position="36"/>
    </location>
    <ligand>
        <name>substrate</name>
    </ligand>
</feature>
<feature type="binding site" evidence="1">
    <location>
        <position position="60"/>
    </location>
    <ligand>
        <name>substrate</name>
    </ligand>
</feature>
<feature type="binding site" evidence="1">
    <location>
        <position position="82"/>
    </location>
    <ligand>
        <name>substrate</name>
    </ligand>
</feature>
<feature type="binding site" evidence="1">
    <location>
        <position position="120"/>
    </location>
    <ligand>
        <name>ATP</name>
        <dbReference type="ChEBI" id="CHEBI:30616"/>
    </ligand>
</feature>
<feature type="binding site" evidence="1">
    <location>
        <position position="140"/>
    </location>
    <ligand>
        <name>substrate</name>
    </ligand>
</feature>
<feature type="binding site" evidence="1">
    <location>
        <position position="157"/>
    </location>
    <ligand>
        <name>ATP</name>
        <dbReference type="ChEBI" id="CHEBI:30616"/>
    </ligand>
</feature>
<gene>
    <name evidence="1" type="primary">aroK</name>
    <name type="ordered locus">ECA4093</name>
</gene>
<sequence>MAEKRNIFLVGPMGAGKSTIGRQLAQQLNMEFFDSDQEIERRTGADVGWVFDVEGEEGFRDREEKVINELTEKQGIVLATGGGSVKSRETRNRLSARGVVVYLETTIEKQLARTQRDKKRPLLQVETPPREVLEALAKERNPLYEEIADVTIRTDEQSAKVVANQIINMLESN</sequence>
<protein>
    <recommendedName>
        <fullName evidence="1">Shikimate kinase 1</fullName>
        <shortName evidence="1">SK 1</shortName>
        <ecNumber evidence="1">2.7.1.71</ecNumber>
    </recommendedName>
</protein>